<feature type="chain" id="PRO_0000156553" description="Homoserine kinase">
    <location>
        <begin position="1"/>
        <end position="297"/>
    </location>
</feature>
<feature type="binding site" evidence="1">
    <location>
        <begin position="84"/>
        <end position="94"/>
    </location>
    <ligand>
        <name>ATP</name>
        <dbReference type="ChEBI" id="CHEBI:30616"/>
    </ligand>
</feature>
<evidence type="ECO:0000255" key="1">
    <source>
        <dbReference type="HAMAP-Rule" id="MF_00384"/>
    </source>
</evidence>
<dbReference type="EC" id="2.7.1.39" evidence="1"/>
<dbReference type="EMBL" id="AP006627">
    <property type="protein sequence ID" value="BAD65474.1"/>
    <property type="molecule type" value="Genomic_DNA"/>
</dbReference>
<dbReference type="RefSeq" id="WP_011247782.1">
    <property type="nucleotide sequence ID" value="NC_006582.1"/>
</dbReference>
<dbReference type="SMR" id="Q5WDT6"/>
<dbReference type="STRING" id="66692.ABC2940"/>
<dbReference type="KEGG" id="bcl:ABC2940"/>
<dbReference type="eggNOG" id="COG0083">
    <property type="taxonomic scope" value="Bacteria"/>
</dbReference>
<dbReference type="HOGENOM" id="CLU_041243_0_0_9"/>
<dbReference type="OrthoDB" id="9769912at2"/>
<dbReference type="UniPathway" id="UPA00050">
    <property type="reaction ID" value="UER00064"/>
</dbReference>
<dbReference type="Proteomes" id="UP000001168">
    <property type="component" value="Chromosome"/>
</dbReference>
<dbReference type="GO" id="GO:0005737">
    <property type="term" value="C:cytoplasm"/>
    <property type="evidence" value="ECO:0007669"/>
    <property type="project" value="UniProtKB-SubCell"/>
</dbReference>
<dbReference type="GO" id="GO:0005524">
    <property type="term" value="F:ATP binding"/>
    <property type="evidence" value="ECO:0007669"/>
    <property type="project" value="UniProtKB-UniRule"/>
</dbReference>
<dbReference type="GO" id="GO:0004413">
    <property type="term" value="F:homoserine kinase activity"/>
    <property type="evidence" value="ECO:0007669"/>
    <property type="project" value="UniProtKB-UniRule"/>
</dbReference>
<dbReference type="GO" id="GO:0009088">
    <property type="term" value="P:threonine biosynthetic process"/>
    <property type="evidence" value="ECO:0007669"/>
    <property type="project" value="UniProtKB-UniRule"/>
</dbReference>
<dbReference type="Gene3D" id="3.30.230.10">
    <property type="match status" value="1"/>
</dbReference>
<dbReference type="Gene3D" id="3.30.70.890">
    <property type="entry name" value="GHMP kinase, C-terminal domain"/>
    <property type="match status" value="1"/>
</dbReference>
<dbReference type="HAMAP" id="MF_00384">
    <property type="entry name" value="Homoser_kinase"/>
    <property type="match status" value="1"/>
</dbReference>
<dbReference type="InterPro" id="IPR013750">
    <property type="entry name" value="GHMP_kinase_C_dom"/>
</dbReference>
<dbReference type="InterPro" id="IPR036554">
    <property type="entry name" value="GHMP_kinase_C_sf"/>
</dbReference>
<dbReference type="InterPro" id="IPR006204">
    <property type="entry name" value="GHMP_kinase_N_dom"/>
</dbReference>
<dbReference type="InterPro" id="IPR000870">
    <property type="entry name" value="Homoserine_kinase"/>
</dbReference>
<dbReference type="InterPro" id="IPR020568">
    <property type="entry name" value="Ribosomal_Su5_D2-typ_SF"/>
</dbReference>
<dbReference type="InterPro" id="IPR014721">
    <property type="entry name" value="Ribsml_uS5_D2-typ_fold_subgr"/>
</dbReference>
<dbReference type="NCBIfam" id="TIGR00191">
    <property type="entry name" value="thrB"/>
    <property type="match status" value="1"/>
</dbReference>
<dbReference type="PANTHER" id="PTHR20861:SF1">
    <property type="entry name" value="HOMOSERINE KINASE"/>
    <property type="match status" value="1"/>
</dbReference>
<dbReference type="PANTHER" id="PTHR20861">
    <property type="entry name" value="HOMOSERINE/4-DIPHOSPHOCYTIDYL-2-C-METHYL-D-ERYTHRITOL KINASE"/>
    <property type="match status" value="1"/>
</dbReference>
<dbReference type="Pfam" id="PF08544">
    <property type="entry name" value="GHMP_kinases_C"/>
    <property type="match status" value="1"/>
</dbReference>
<dbReference type="Pfam" id="PF00288">
    <property type="entry name" value="GHMP_kinases_N"/>
    <property type="match status" value="1"/>
</dbReference>
<dbReference type="PIRSF" id="PIRSF000676">
    <property type="entry name" value="Homoser_kin"/>
    <property type="match status" value="1"/>
</dbReference>
<dbReference type="PRINTS" id="PR00958">
    <property type="entry name" value="HOMSERKINASE"/>
</dbReference>
<dbReference type="SUPFAM" id="SSF55060">
    <property type="entry name" value="GHMP Kinase, C-terminal domain"/>
    <property type="match status" value="1"/>
</dbReference>
<dbReference type="SUPFAM" id="SSF54211">
    <property type="entry name" value="Ribosomal protein S5 domain 2-like"/>
    <property type="match status" value="1"/>
</dbReference>
<keyword id="KW-0028">Amino-acid biosynthesis</keyword>
<keyword id="KW-0067">ATP-binding</keyword>
<keyword id="KW-0963">Cytoplasm</keyword>
<keyword id="KW-0418">Kinase</keyword>
<keyword id="KW-0547">Nucleotide-binding</keyword>
<keyword id="KW-1185">Reference proteome</keyword>
<keyword id="KW-0791">Threonine biosynthesis</keyword>
<keyword id="KW-0808">Transferase</keyword>
<organism>
    <name type="scientific">Shouchella clausii (strain KSM-K16)</name>
    <name type="common">Alkalihalobacillus clausii</name>
    <dbReference type="NCBI Taxonomy" id="66692"/>
    <lineage>
        <taxon>Bacteria</taxon>
        <taxon>Bacillati</taxon>
        <taxon>Bacillota</taxon>
        <taxon>Bacilli</taxon>
        <taxon>Bacillales</taxon>
        <taxon>Bacillaceae</taxon>
        <taxon>Shouchella</taxon>
    </lineage>
</organism>
<reference key="1">
    <citation type="submission" date="2003-10" db="EMBL/GenBank/DDBJ databases">
        <title>The complete genome sequence of the alkaliphilic Bacillus clausii KSM-K16.</title>
        <authorList>
            <person name="Takaki Y."/>
            <person name="Kageyama Y."/>
            <person name="Shimamura S."/>
            <person name="Suzuki H."/>
            <person name="Nishi S."/>
            <person name="Hatada Y."/>
            <person name="Kawai S."/>
            <person name="Ito S."/>
            <person name="Horikoshi K."/>
        </authorList>
    </citation>
    <scope>NUCLEOTIDE SEQUENCE [LARGE SCALE GENOMIC DNA]</scope>
    <source>
        <strain>KSM-K16</strain>
    </source>
</reference>
<protein>
    <recommendedName>
        <fullName evidence="1">Homoserine kinase</fullName>
        <shortName evidence="1">HK</shortName>
        <shortName evidence="1">HSK</shortName>
        <ecNumber evidence="1">2.7.1.39</ecNumber>
    </recommendedName>
</protein>
<sequence length="297" mass="31324">MAFSITVPASTANLGPGFDSIGLALNRYLHLEVEQASKWSFICSSPGLENIGTDNLVTKAATFASKEWGKVLPPCQVVMKNDIPLSKGFGSSAAAIVAGIELAASVCGQFASKAEKARLASLWEGHPDNVAASIYGGLVIGTHSEESTEILHVEAPNIDLVALIPSKTLATKKARAVLPDMLSYKEAVQASSVANVLAAALVKQDWELVGKMMLADRFHQPYRQQLIPHLPDVCAYAQADEDAYGAALSGAGPIILCLVKEGKGEAFASRLHKQFPACRAEVMRPAVQGSAVSIAQA</sequence>
<proteinExistence type="inferred from homology"/>
<gene>
    <name evidence="1" type="primary">thrB</name>
    <name type="ordered locus">ABC2940</name>
</gene>
<accession>Q5WDT6</accession>
<name>KHSE_SHOC1</name>
<comment type="function">
    <text evidence="1">Catalyzes the ATP-dependent phosphorylation of L-homoserine to L-homoserine phosphate.</text>
</comment>
<comment type="catalytic activity">
    <reaction evidence="1">
        <text>L-homoserine + ATP = O-phospho-L-homoserine + ADP + H(+)</text>
        <dbReference type="Rhea" id="RHEA:13985"/>
        <dbReference type="ChEBI" id="CHEBI:15378"/>
        <dbReference type="ChEBI" id="CHEBI:30616"/>
        <dbReference type="ChEBI" id="CHEBI:57476"/>
        <dbReference type="ChEBI" id="CHEBI:57590"/>
        <dbReference type="ChEBI" id="CHEBI:456216"/>
        <dbReference type="EC" id="2.7.1.39"/>
    </reaction>
</comment>
<comment type="pathway">
    <text evidence="1">Amino-acid biosynthesis; L-threonine biosynthesis; L-threonine from L-aspartate: step 4/5.</text>
</comment>
<comment type="subcellular location">
    <subcellularLocation>
        <location evidence="1">Cytoplasm</location>
    </subcellularLocation>
</comment>
<comment type="similarity">
    <text evidence="1">Belongs to the GHMP kinase family. Homoserine kinase subfamily.</text>
</comment>